<reference key="1">
    <citation type="journal article" date="2007" name="Genome Res.">
        <title>Genome characteristics of facultatively symbiotic Frankia sp. strains reflect host range and host plant biogeography.</title>
        <authorList>
            <person name="Normand P."/>
            <person name="Lapierre P."/>
            <person name="Tisa L.S."/>
            <person name="Gogarten J.P."/>
            <person name="Alloisio N."/>
            <person name="Bagnarol E."/>
            <person name="Bassi C.A."/>
            <person name="Berry A.M."/>
            <person name="Bickhart D.M."/>
            <person name="Choisne N."/>
            <person name="Couloux A."/>
            <person name="Cournoyer B."/>
            <person name="Cruveiller S."/>
            <person name="Daubin V."/>
            <person name="Demange N."/>
            <person name="Francino M.P."/>
            <person name="Goltsman E."/>
            <person name="Huang Y."/>
            <person name="Kopp O.R."/>
            <person name="Labarre L."/>
            <person name="Lapidus A."/>
            <person name="Lavire C."/>
            <person name="Marechal J."/>
            <person name="Martinez M."/>
            <person name="Mastronunzio J.E."/>
            <person name="Mullin B.C."/>
            <person name="Niemann J."/>
            <person name="Pujic P."/>
            <person name="Rawnsley T."/>
            <person name="Rouy Z."/>
            <person name="Schenowitz C."/>
            <person name="Sellstedt A."/>
            <person name="Tavares F."/>
            <person name="Tomkins J.P."/>
            <person name="Vallenet D."/>
            <person name="Valverde C."/>
            <person name="Wall L.G."/>
            <person name="Wang Y."/>
            <person name="Medigue C."/>
            <person name="Benson D.R."/>
        </authorList>
    </citation>
    <scope>NUCLEOTIDE SEQUENCE [LARGE SCALE GENOMIC DNA]</scope>
    <source>
        <strain>DSM 45818 / CECT 9043 / HFP020203 / CcI3</strain>
    </source>
</reference>
<organism>
    <name type="scientific">Frankia casuarinae (strain DSM 45818 / CECT 9043 / HFP020203 / CcI3)</name>
    <dbReference type="NCBI Taxonomy" id="106370"/>
    <lineage>
        <taxon>Bacteria</taxon>
        <taxon>Bacillati</taxon>
        <taxon>Actinomycetota</taxon>
        <taxon>Actinomycetes</taxon>
        <taxon>Frankiales</taxon>
        <taxon>Frankiaceae</taxon>
        <taxon>Frankia</taxon>
    </lineage>
</organism>
<evidence type="ECO:0000255" key="1">
    <source>
        <dbReference type="HAMAP-Rule" id="MF_00503"/>
    </source>
</evidence>
<evidence type="ECO:0000305" key="2"/>
<keyword id="KW-1185">Reference proteome</keyword>
<keyword id="KW-0687">Ribonucleoprotein</keyword>
<keyword id="KW-0689">Ribosomal protein</keyword>
<keyword id="KW-0694">RNA-binding</keyword>
<keyword id="KW-0699">rRNA-binding</keyword>
<accession>Q2J4C7</accession>
<comment type="function">
    <text evidence="1">Binds to the 23S rRNA.</text>
</comment>
<comment type="similarity">
    <text evidence="1">Belongs to the bacterial ribosomal protein bL9 family.</text>
</comment>
<protein>
    <recommendedName>
        <fullName evidence="1">Large ribosomal subunit protein bL9</fullName>
    </recommendedName>
    <alternativeName>
        <fullName evidence="2">50S ribosomal protein L9</fullName>
    </alternativeName>
</protein>
<sequence>MKLILTQEVPGLGSPGDIVEVANGYGRNYLVPRRYAILATKGAERQVEQIKRARSARAVRDLGHAQEIAGQLGGLKVELTSRAGKEGRLFGSVTAADVVEAVTAAGGPELDRRRVELTTPIKSLGAYTVAVHLHPEVTATVKLQVTQA</sequence>
<feature type="chain" id="PRO_0000236524" description="Large ribosomal subunit protein bL9">
    <location>
        <begin position="1"/>
        <end position="148"/>
    </location>
</feature>
<proteinExistence type="inferred from homology"/>
<dbReference type="EMBL" id="CP000249">
    <property type="protein sequence ID" value="ABD13865.1"/>
    <property type="molecule type" value="Genomic_DNA"/>
</dbReference>
<dbReference type="RefSeq" id="WP_011438873.1">
    <property type="nucleotide sequence ID" value="NZ_MSEA01000600.1"/>
</dbReference>
<dbReference type="SMR" id="Q2J4C7"/>
<dbReference type="STRING" id="106370.Francci3_4519"/>
<dbReference type="KEGG" id="fra:Francci3_4519"/>
<dbReference type="eggNOG" id="COG0359">
    <property type="taxonomic scope" value="Bacteria"/>
</dbReference>
<dbReference type="HOGENOM" id="CLU_078938_5_1_11"/>
<dbReference type="OrthoDB" id="9788336at2"/>
<dbReference type="PhylomeDB" id="Q2J4C7"/>
<dbReference type="Proteomes" id="UP000001937">
    <property type="component" value="Chromosome"/>
</dbReference>
<dbReference type="GO" id="GO:1990904">
    <property type="term" value="C:ribonucleoprotein complex"/>
    <property type="evidence" value="ECO:0007669"/>
    <property type="project" value="UniProtKB-KW"/>
</dbReference>
<dbReference type="GO" id="GO:0005840">
    <property type="term" value="C:ribosome"/>
    <property type="evidence" value="ECO:0007669"/>
    <property type="project" value="UniProtKB-KW"/>
</dbReference>
<dbReference type="GO" id="GO:0019843">
    <property type="term" value="F:rRNA binding"/>
    <property type="evidence" value="ECO:0007669"/>
    <property type="project" value="UniProtKB-UniRule"/>
</dbReference>
<dbReference type="GO" id="GO:0003735">
    <property type="term" value="F:structural constituent of ribosome"/>
    <property type="evidence" value="ECO:0007669"/>
    <property type="project" value="InterPro"/>
</dbReference>
<dbReference type="GO" id="GO:0006412">
    <property type="term" value="P:translation"/>
    <property type="evidence" value="ECO:0007669"/>
    <property type="project" value="UniProtKB-UniRule"/>
</dbReference>
<dbReference type="FunFam" id="3.10.430.100:FF:000006">
    <property type="entry name" value="50S ribosomal protein L9"/>
    <property type="match status" value="1"/>
</dbReference>
<dbReference type="FunFam" id="3.40.5.10:FF:000003">
    <property type="entry name" value="50S ribosomal protein L9"/>
    <property type="match status" value="1"/>
</dbReference>
<dbReference type="Gene3D" id="3.10.430.100">
    <property type="entry name" value="Ribosomal protein L9, C-terminal domain"/>
    <property type="match status" value="1"/>
</dbReference>
<dbReference type="Gene3D" id="3.40.5.10">
    <property type="entry name" value="Ribosomal protein L9, N-terminal domain"/>
    <property type="match status" value="1"/>
</dbReference>
<dbReference type="HAMAP" id="MF_00503">
    <property type="entry name" value="Ribosomal_bL9"/>
    <property type="match status" value="1"/>
</dbReference>
<dbReference type="InterPro" id="IPR000244">
    <property type="entry name" value="Ribosomal_bL9"/>
</dbReference>
<dbReference type="InterPro" id="IPR009027">
    <property type="entry name" value="Ribosomal_bL9/RNase_H1_N"/>
</dbReference>
<dbReference type="InterPro" id="IPR020594">
    <property type="entry name" value="Ribosomal_bL9_bac/chp"/>
</dbReference>
<dbReference type="InterPro" id="IPR020069">
    <property type="entry name" value="Ribosomal_bL9_C"/>
</dbReference>
<dbReference type="InterPro" id="IPR036791">
    <property type="entry name" value="Ribosomal_bL9_C_sf"/>
</dbReference>
<dbReference type="InterPro" id="IPR020070">
    <property type="entry name" value="Ribosomal_bL9_N"/>
</dbReference>
<dbReference type="InterPro" id="IPR036935">
    <property type="entry name" value="Ribosomal_bL9_N_sf"/>
</dbReference>
<dbReference type="NCBIfam" id="TIGR00158">
    <property type="entry name" value="L9"/>
    <property type="match status" value="1"/>
</dbReference>
<dbReference type="PANTHER" id="PTHR21368">
    <property type="entry name" value="50S RIBOSOMAL PROTEIN L9"/>
    <property type="match status" value="1"/>
</dbReference>
<dbReference type="Pfam" id="PF03948">
    <property type="entry name" value="Ribosomal_L9_C"/>
    <property type="match status" value="1"/>
</dbReference>
<dbReference type="Pfam" id="PF01281">
    <property type="entry name" value="Ribosomal_L9_N"/>
    <property type="match status" value="1"/>
</dbReference>
<dbReference type="SUPFAM" id="SSF55658">
    <property type="entry name" value="L9 N-domain-like"/>
    <property type="match status" value="1"/>
</dbReference>
<dbReference type="SUPFAM" id="SSF55653">
    <property type="entry name" value="Ribosomal protein L9 C-domain"/>
    <property type="match status" value="1"/>
</dbReference>
<dbReference type="PROSITE" id="PS00651">
    <property type="entry name" value="RIBOSOMAL_L9"/>
    <property type="match status" value="1"/>
</dbReference>
<gene>
    <name evidence="1" type="primary">rplI</name>
    <name type="ordered locus">Francci3_4519</name>
</gene>
<name>RL9_FRACC</name>